<proteinExistence type="inferred from homology"/>
<organism>
    <name type="scientific">Salmonella paratyphi C (strain RKS4594)</name>
    <dbReference type="NCBI Taxonomy" id="476213"/>
    <lineage>
        <taxon>Bacteria</taxon>
        <taxon>Pseudomonadati</taxon>
        <taxon>Pseudomonadota</taxon>
        <taxon>Gammaproteobacteria</taxon>
        <taxon>Enterobacterales</taxon>
        <taxon>Enterobacteriaceae</taxon>
        <taxon>Salmonella</taxon>
    </lineage>
</organism>
<accession>C0Q845</accession>
<keyword id="KW-0378">Hydrolase</keyword>
<keyword id="KW-0479">Metal-binding</keyword>
<keyword id="KW-0665">Pyrimidine biosynthesis</keyword>
<keyword id="KW-0862">Zinc</keyword>
<comment type="function">
    <text evidence="1">Catalyzes the reversible cyclization of carbamoyl aspartate to dihydroorotate.</text>
</comment>
<comment type="catalytic activity">
    <reaction evidence="1">
        <text>(S)-dihydroorotate + H2O = N-carbamoyl-L-aspartate + H(+)</text>
        <dbReference type="Rhea" id="RHEA:24296"/>
        <dbReference type="ChEBI" id="CHEBI:15377"/>
        <dbReference type="ChEBI" id="CHEBI:15378"/>
        <dbReference type="ChEBI" id="CHEBI:30864"/>
        <dbReference type="ChEBI" id="CHEBI:32814"/>
        <dbReference type="EC" id="3.5.2.3"/>
    </reaction>
</comment>
<comment type="cofactor">
    <cofactor evidence="1">
        <name>Zn(2+)</name>
        <dbReference type="ChEBI" id="CHEBI:29105"/>
    </cofactor>
    <text evidence="1">Binds 2 Zn(2+) ions per subunit.</text>
</comment>
<comment type="pathway">
    <text evidence="1">Pyrimidine metabolism; UMP biosynthesis via de novo pathway; (S)-dihydroorotate from bicarbonate: step 3/3.</text>
</comment>
<comment type="subunit">
    <text evidence="1">Homodimer.</text>
</comment>
<comment type="similarity">
    <text evidence="1">Belongs to the metallo-dependent hydrolases superfamily. DHOase family. Class II DHOase subfamily.</text>
</comment>
<protein>
    <recommendedName>
        <fullName evidence="1">Dihydroorotase</fullName>
        <shortName evidence="1">DHOase</shortName>
        <ecNumber evidence="1">3.5.2.3</ecNumber>
    </recommendedName>
</protein>
<evidence type="ECO:0000255" key="1">
    <source>
        <dbReference type="HAMAP-Rule" id="MF_00219"/>
    </source>
</evidence>
<dbReference type="EC" id="3.5.2.3" evidence="1"/>
<dbReference type="EMBL" id="CP000857">
    <property type="protein sequence ID" value="ACN46690.1"/>
    <property type="molecule type" value="Genomic_DNA"/>
</dbReference>
<dbReference type="RefSeq" id="WP_000126597.1">
    <property type="nucleotide sequence ID" value="NC_012125.1"/>
</dbReference>
<dbReference type="SMR" id="C0Q845"/>
<dbReference type="MEROPS" id="M38.A02"/>
<dbReference type="KEGG" id="sei:SPC_2586"/>
<dbReference type="HOGENOM" id="CLU_041558_1_0_6"/>
<dbReference type="UniPathway" id="UPA00070">
    <property type="reaction ID" value="UER00117"/>
</dbReference>
<dbReference type="Proteomes" id="UP000001599">
    <property type="component" value="Chromosome"/>
</dbReference>
<dbReference type="GO" id="GO:0005829">
    <property type="term" value="C:cytosol"/>
    <property type="evidence" value="ECO:0007669"/>
    <property type="project" value="TreeGrafter"/>
</dbReference>
<dbReference type="GO" id="GO:0004151">
    <property type="term" value="F:dihydroorotase activity"/>
    <property type="evidence" value="ECO:0007669"/>
    <property type="project" value="UniProtKB-UniRule"/>
</dbReference>
<dbReference type="GO" id="GO:0008270">
    <property type="term" value="F:zinc ion binding"/>
    <property type="evidence" value="ECO:0007669"/>
    <property type="project" value="UniProtKB-UniRule"/>
</dbReference>
<dbReference type="GO" id="GO:0006207">
    <property type="term" value="P:'de novo' pyrimidine nucleobase biosynthetic process"/>
    <property type="evidence" value="ECO:0007669"/>
    <property type="project" value="TreeGrafter"/>
</dbReference>
<dbReference type="GO" id="GO:0044205">
    <property type="term" value="P:'de novo' UMP biosynthetic process"/>
    <property type="evidence" value="ECO:0007669"/>
    <property type="project" value="UniProtKB-UniRule"/>
</dbReference>
<dbReference type="CDD" id="cd01294">
    <property type="entry name" value="DHOase"/>
    <property type="match status" value="1"/>
</dbReference>
<dbReference type="FunFam" id="3.20.20.140:FF:000006">
    <property type="entry name" value="Dihydroorotase"/>
    <property type="match status" value="1"/>
</dbReference>
<dbReference type="Gene3D" id="3.20.20.140">
    <property type="entry name" value="Metal-dependent hydrolases"/>
    <property type="match status" value="1"/>
</dbReference>
<dbReference type="HAMAP" id="MF_00219">
    <property type="entry name" value="PyrC_classII"/>
    <property type="match status" value="1"/>
</dbReference>
<dbReference type="InterPro" id="IPR006680">
    <property type="entry name" value="Amidohydro-rel"/>
</dbReference>
<dbReference type="InterPro" id="IPR004721">
    <property type="entry name" value="DHOdimr"/>
</dbReference>
<dbReference type="InterPro" id="IPR002195">
    <property type="entry name" value="Dihydroorotase_CS"/>
</dbReference>
<dbReference type="InterPro" id="IPR032466">
    <property type="entry name" value="Metal_Hydrolase"/>
</dbReference>
<dbReference type="NCBIfam" id="TIGR00856">
    <property type="entry name" value="pyrC_dimer"/>
    <property type="match status" value="1"/>
</dbReference>
<dbReference type="PANTHER" id="PTHR43137">
    <property type="entry name" value="DIHYDROOROTASE"/>
    <property type="match status" value="1"/>
</dbReference>
<dbReference type="PANTHER" id="PTHR43137:SF1">
    <property type="entry name" value="DIHYDROOROTASE"/>
    <property type="match status" value="1"/>
</dbReference>
<dbReference type="Pfam" id="PF01979">
    <property type="entry name" value="Amidohydro_1"/>
    <property type="match status" value="1"/>
</dbReference>
<dbReference type="PIRSF" id="PIRSF001237">
    <property type="entry name" value="DHOdimr"/>
    <property type="match status" value="1"/>
</dbReference>
<dbReference type="SUPFAM" id="SSF51556">
    <property type="entry name" value="Metallo-dependent hydrolases"/>
    <property type="match status" value="1"/>
</dbReference>
<dbReference type="PROSITE" id="PS00482">
    <property type="entry name" value="DIHYDROOROTASE_1"/>
    <property type="match status" value="1"/>
</dbReference>
<dbReference type="PROSITE" id="PS00483">
    <property type="entry name" value="DIHYDROOROTASE_2"/>
    <property type="match status" value="1"/>
</dbReference>
<gene>
    <name evidence="1" type="primary">pyrC</name>
    <name type="ordered locus">SPC_2586</name>
</gene>
<reference key="1">
    <citation type="journal article" date="2009" name="PLoS ONE">
        <title>Salmonella paratyphi C: genetic divergence from Salmonella choleraesuis and pathogenic convergence with Salmonella typhi.</title>
        <authorList>
            <person name="Liu W.-Q."/>
            <person name="Feng Y."/>
            <person name="Wang Y."/>
            <person name="Zou Q.-H."/>
            <person name="Chen F."/>
            <person name="Guo J.-T."/>
            <person name="Peng Y.-H."/>
            <person name="Jin Y."/>
            <person name="Li Y.-G."/>
            <person name="Hu S.-N."/>
            <person name="Johnston R.N."/>
            <person name="Liu G.-R."/>
            <person name="Liu S.-L."/>
        </authorList>
    </citation>
    <scope>NUCLEOTIDE SEQUENCE [LARGE SCALE GENOMIC DNA]</scope>
    <source>
        <strain>RKS4594</strain>
    </source>
</reference>
<feature type="chain" id="PRO_1000193081" description="Dihydroorotase">
    <location>
        <begin position="1"/>
        <end position="348"/>
    </location>
</feature>
<feature type="active site" evidence="1">
    <location>
        <position position="251"/>
    </location>
</feature>
<feature type="binding site" evidence="1">
    <location>
        <position position="17"/>
    </location>
    <ligand>
        <name>Zn(2+)</name>
        <dbReference type="ChEBI" id="CHEBI:29105"/>
        <label>1</label>
    </ligand>
</feature>
<feature type="binding site" evidence="1">
    <location>
        <begin position="19"/>
        <end position="21"/>
    </location>
    <ligand>
        <name>substrate</name>
    </ligand>
</feature>
<feature type="binding site" evidence="1">
    <location>
        <position position="19"/>
    </location>
    <ligand>
        <name>Zn(2+)</name>
        <dbReference type="ChEBI" id="CHEBI:29105"/>
        <label>1</label>
    </ligand>
</feature>
<feature type="binding site" evidence="1">
    <location>
        <position position="45"/>
    </location>
    <ligand>
        <name>substrate</name>
    </ligand>
</feature>
<feature type="binding site" description="via carbamate group" evidence="1">
    <location>
        <position position="103"/>
    </location>
    <ligand>
        <name>Zn(2+)</name>
        <dbReference type="ChEBI" id="CHEBI:29105"/>
        <label>1</label>
    </ligand>
</feature>
<feature type="binding site" description="via carbamate group" evidence="1">
    <location>
        <position position="103"/>
    </location>
    <ligand>
        <name>Zn(2+)</name>
        <dbReference type="ChEBI" id="CHEBI:29105"/>
        <label>2</label>
    </ligand>
</feature>
<feature type="binding site" evidence="1">
    <location>
        <position position="140"/>
    </location>
    <ligand>
        <name>substrate</name>
    </ligand>
</feature>
<feature type="binding site" evidence="1">
    <location>
        <position position="140"/>
    </location>
    <ligand>
        <name>Zn(2+)</name>
        <dbReference type="ChEBI" id="CHEBI:29105"/>
        <label>2</label>
    </ligand>
</feature>
<feature type="binding site" evidence="1">
    <location>
        <position position="178"/>
    </location>
    <ligand>
        <name>Zn(2+)</name>
        <dbReference type="ChEBI" id="CHEBI:29105"/>
        <label>2</label>
    </ligand>
</feature>
<feature type="binding site" evidence="1">
    <location>
        <position position="223"/>
    </location>
    <ligand>
        <name>substrate</name>
    </ligand>
</feature>
<feature type="binding site" evidence="1">
    <location>
        <position position="251"/>
    </location>
    <ligand>
        <name>Zn(2+)</name>
        <dbReference type="ChEBI" id="CHEBI:29105"/>
        <label>1</label>
    </ligand>
</feature>
<feature type="binding site" evidence="1">
    <location>
        <position position="255"/>
    </location>
    <ligand>
        <name>substrate</name>
    </ligand>
</feature>
<feature type="binding site" evidence="1">
    <location>
        <position position="267"/>
    </location>
    <ligand>
        <name>substrate</name>
    </ligand>
</feature>
<feature type="modified residue" description="N6-carboxylysine" evidence="1">
    <location>
        <position position="103"/>
    </location>
</feature>
<sequence length="348" mass="38679">MTAPSQVLKIRRPDDWHVHLRDGDMLKTVVPYTSEIYGRAIVMPNLASPITTVDAAIAYRQRILDAVPAGHDFTPLMTCYLTDSLDADELERGFHEGVFTAAKLYPANATTNSSHGVTSVDAIMPVLERMEKLGMPLLVHGEVTHADVDIFDREARFIDTVMEPLRQRLTTLKVVFEHITTKDAAQYVRDGNDYLAATITPQHLMFNRNDMLVGGIRPHLYCLPILKRNIHQQALRELVASGFTRAFLGTDSAPHSRHRKETSCGCAGCFNAPSALGSYAAVFEEMNALAHFEAFCSLNGPQFYGLPVNTGWVELVRDEQQVPENIALADDSLVPFLAGETVRWSVKK</sequence>
<name>PYRC_SALPC</name>